<keyword id="KW-0131">Cell cycle</keyword>
<keyword id="KW-0132">Cell division</keyword>
<keyword id="KW-0997">Cell inner membrane</keyword>
<keyword id="KW-1003">Cell membrane</keyword>
<keyword id="KW-0133">Cell shape</keyword>
<keyword id="KW-0961">Cell wall biogenesis/degradation</keyword>
<keyword id="KW-0460">Magnesium</keyword>
<keyword id="KW-0472">Membrane</keyword>
<keyword id="KW-0479">Metal-binding</keyword>
<keyword id="KW-0573">Peptidoglycan synthesis</keyword>
<keyword id="KW-0808">Transferase</keyword>
<keyword id="KW-0812">Transmembrane</keyword>
<keyword id="KW-1133">Transmembrane helix</keyword>
<name>MRAY_BURP6</name>
<evidence type="ECO:0000255" key="1">
    <source>
        <dbReference type="HAMAP-Rule" id="MF_00038"/>
    </source>
</evidence>
<sequence length="389" mass="42882">MLLALAQWLQGDASFLRLFTYLTFRAVMATITALVIGLVCGPWVIRKLTQMKVGQAVRKDGPQTHLVKSGTPTMGGVLILIGIAVATLLWGDLTNRFIWIVMLVTFGFGVIGWVDDYRKVVYKDPRGMSSREKYFWQSVIGLFAAVYLAFSVSEANNVRVFDLFMAWVRSGLSMGLPARADLMLPFLKSISYPLGVWGFIALTYFVIVGASNAVNLTDGLDGLVIMPVVLVGASLGVFAYVMGSAVYSKYLLFPHIPGAGELLIFCSAMGGAGLAFLWYNTHPAQVFMGDVGALALGGALGTVAVIVRQEIVLFIMGGIFVAETLSVMLQVTWFKYTKKRYGEGRRIFKMAPLHHHFELSGWKETQVVVRFWIITLMLCLFGLSTLKLR</sequence>
<dbReference type="EC" id="2.7.8.13" evidence="1"/>
<dbReference type="EMBL" id="CP000570">
    <property type="protein sequence ID" value="ABN81551.1"/>
    <property type="molecule type" value="Genomic_DNA"/>
</dbReference>
<dbReference type="RefSeq" id="WP_004194370.1">
    <property type="nucleotide sequence ID" value="NC_009074.1"/>
</dbReference>
<dbReference type="SMR" id="A3NDW7"/>
<dbReference type="GeneID" id="92980246"/>
<dbReference type="KEGG" id="bpd:BURPS668_3528"/>
<dbReference type="HOGENOM" id="CLU_023982_0_0_4"/>
<dbReference type="UniPathway" id="UPA00219"/>
<dbReference type="GO" id="GO:0005886">
    <property type="term" value="C:plasma membrane"/>
    <property type="evidence" value="ECO:0007669"/>
    <property type="project" value="UniProtKB-SubCell"/>
</dbReference>
<dbReference type="GO" id="GO:0046872">
    <property type="term" value="F:metal ion binding"/>
    <property type="evidence" value="ECO:0007669"/>
    <property type="project" value="UniProtKB-KW"/>
</dbReference>
<dbReference type="GO" id="GO:0008963">
    <property type="term" value="F:phospho-N-acetylmuramoyl-pentapeptide-transferase activity"/>
    <property type="evidence" value="ECO:0007669"/>
    <property type="project" value="UniProtKB-UniRule"/>
</dbReference>
<dbReference type="GO" id="GO:0051992">
    <property type="term" value="F:UDP-N-acetylmuramoyl-L-alanyl-D-glutamyl-meso-2,6-diaminopimelyl-D-alanyl-D-alanine:undecaprenyl-phosphate transferase activity"/>
    <property type="evidence" value="ECO:0007669"/>
    <property type="project" value="RHEA"/>
</dbReference>
<dbReference type="GO" id="GO:0051301">
    <property type="term" value="P:cell division"/>
    <property type="evidence" value="ECO:0007669"/>
    <property type="project" value="UniProtKB-KW"/>
</dbReference>
<dbReference type="GO" id="GO:0071555">
    <property type="term" value="P:cell wall organization"/>
    <property type="evidence" value="ECO:0007669"/>
    <property type="project" value="UniProtKB-KW"/>
</dbReference>
<dbReference type="GO" id="GO:0009252">
    <property type="term" value="P:peptidoglycan biosynthetic process"/>
    <property type="evidence" value="ECO:0007669"/>
    <property type="project" value="UniProtKB-UniRule"/>
</dbReference>
<dbReference type="GO" id="GO:0008360">
    <property type="term" value="P:regulation of cell shape"/>
    <property type="evidence" value="ECO:0007669"/>
    <property type="project" value="UniProtKB-KW"/>
</dbReference>
<dbReference type="CDD" id="cd06852">
    <property type="entry name" value="GT_MraY"/>
    <property type="match status" value="1"/>
</dbReference>
<dbReference type="HAMAP" id="MF_00038">
    <property type="entry name" value="MraY"/>
    <property type="match status" value="1"/>
</dbReference>
<dbReference type="InterPro" id="IPR000715">
    <property type="entry name" value="Glycosyl_transferase_4"/>
</dbReference>
<dbReference type="InterPro" id="IPR003524">
    <property type="entry name" value="PNAcMuramoyl-5peptid_Trfase"/>
</dbReference>
<dbReference type="InterPro" id="IPR018480">
    <property type="entry name" value="PNAcMuramoyl-5peptid_Trfase_CS"/>
</dbReference>
<dbReference type="NCBIfam" id="TIGR00445">
    <property type="entry name" value="mraY"/>
    <property type="match status" value="1"/>
</dbReference>
<dbReference type="PANTHER" id="PTHR22926">
    <property type="entry name" value="PHOSPHO-N-ACETYLMURAMOYL-PENTAPEPTIDE-TRANSFERASE"/>
    <property type="match status" value="1"/>
</dbReference>
<dbReference type="PANTHER" id="PTHR22926:SF5">
    <property type="entry name" value="PHOSPHO-N-ACETYLMURAMOYL-PENTAPEPTIDE-TRANSFERASE HOMOLOG"/>
    <property type="match status" value="1"/>
</dbReference>
<dbReference type="Pfam" id="PF00953">
    <property type="entry name" value="Glycos_transf_4"/>
    <property type="match status" value="1"/>
</dbReference>
<dbReference type="Pfam" id="PF10555">
    <property type="entry name" value="MraY_sig1"/>
    <property type="match status" value="1"/>
</dbReference>
<dbReference type="PROSITE" id="PS01347">
    <property type="entry name" value="MRAY_1"/>
    <property type="match status" value="1"/>
</dbReference>
<dbReference type="PROSITE" id="PS01348">
    <property type="entry name" value="MRAY_2"/>
    <property type="match status" value="1"/>
</dbReference>
<protein>
    <recommendedName>
        <fullName evidence="1">Phospho-N-acetylmuramoyl-pentapeptide-transferase</fullName>
        <ecNumber evidence="1">2.7.8.13</ecNumber>
    </recommendedName>
    <alternativeName>
        <fullName evidence="1">UDP-MurNAc-pentapeptide phosphotransferase</fullName>
    </alternativeName>
</protein>
<feature type="chain" id="PRO_1000002951" description="Phospho-N-acetylmuramoyl-pentapeptide-transferase">
    <location>
        <begin position="1"/>
        <end position="389"/>
    </location>
</feature>
<feature type="transmembrane region" description="Helical" evidence="1">
    <location>
        <begin position="25"/>
        <end position="45"/>
    </location>
</feature>
<feature type="transmembrane region" description="Helical" evidence="1">
    <location>
        <begin position="73"/>
        <end position="93"/>
    </location>
</feature>
<feature type="transmembrane region" description="Helical" evidence="1">
    <location>
        <begin position="97"/>
        <end position="117"/>
    </location>
</feature>
<feature type="transmembrane region" description="Helical" evidence="1">
    <location>
        <begin position="135"/>
        <end position="155"/>
    </location>
</feature>
<feature type="transmembrane region" description="Helical" evidence="1">
    <location>
        <begin position="190"/>
        <end position="210"/>
    </location>
</feature>
<feature type="transmembrane region" description="Helical" evidence="1">
    <location>
        <begin position="222"/>
        <end position="242"/>
    </location>
</feature>
<feature type="transmembrane region" description="Helical" evidence="1">
    <location>
        <begin position="258"/>
        <end position="278"/>
    </location>
</feature>
<feature type="transmembrane region" description="Helical" evidence="1">
    <location>
        <begin position="286"/>
        <end position="306"/>
    </location>
</feature>
<feature type="transmembrane region" description="Helical" evidence="1">
    <location>
        <begin position="311"/>
        <end position="331"/>
    </location>
</feature>
<feature type="transmembrane region" description="Helical" evidence="1">
    <location>
        <begin position="366"/>
        <end position="386"/>
    </location>
</feature>
<comment type="function">
    <text evidence="1">Catalyzes the initial step of the lipid cycle reactions in the biosynthesis of the cell wall peptidoglycan: transfers peptidoglycan precursor phospho-MurNAc-pentapeptide from UDP-MurNAc-pentapeptide onto the lipid carrier undecaprenyl phosphate, yielding undecaprenyl-pyrophosphoryl-MurNAc-pentapeptide, known as lipid I.</text>
</comment>
<comment type="catalytic activity">
    <reaction evidence="1">
        <text>UDP-N-acetyl-alpha-D-muramoyl-L-alanyl-gamma-D-glutamyl-meso-2,6-diaminopimeloyl-D-alanyl-D-alanine + di-trans,octa-cis-undecaprenyl phosphate = di-trans,octa-cis-undecaprenyl diphospho-N-acetyl-alpha-D-muramoyl-L-alanyl-D-glutamyl-meso-2,6-diaminopimeloyl-D-alanyl-D-alanine + UMP</text>
        <dbReference type="Rhea" id="RHEA:28386"/>
        <dbReference type="ChEBI" id="CHEBI:57865"/>
        <dbReference type="ChEBI" id="CHEBI:60392"/>
        <dbReference type="ChEBI" id="CHEBI:61386"/>
        <dbReference type="ChEBI" id="CHEBI:61387"/>
        <dbReference type="EC" id="2.7.8.13"/>
    </reaction>
</comment>
<comment type="cofactor">
    <cofactor evidence="1">
        <name>Mg(2+)</name>
        <dbReference type="ChEBI" id="CHEBI:18420"/>
    </cofactor>
</comment>
<comment type="pathway">
    <text evidence="1">Cell wall biogenesis; peptidoglycan biosynthesis.</text>
</comment>
<comment type="subcellular location">
    <subcellularLocation>
        <location evidence="1">Cell inner membrane</location>
        <topology evidence="1">Multi-pass membrane protein</topology>
    </subcellularLocation>
</comment>
<comment type="similarity">
    <text evidence="1">Belongs to the glycosyltransferase 4 family. MraY subfamily.</text>
</comment>
<gene>
    <name evidence="1" type="primary">mraY</name>
    <name type="ordered locus">BURPS668_3528</name>
</gene>
<organism>
    <name type="scientific">Burkholderia pseudomallei (strain 668)</name>
    <dbReference type="NCBI Taxonomy" id="320373"/>
    <lineage>
        <taxon>Bacteria</taxon>
        <taxon>Pseudomonadati</taxon>
        <taxon>Pseudomonadota</taxon>
        <taxon>Betaproteobacteria</taxon>
        <taxon>Burkholderiales</taxon>
        <taxon>Burkholderiaceae</taxon>
        <taxon>Burkholderia</taxon>
        <taxon>pseudomallei group</taxon>
    </lineage>
</organism>
<reference key="1">
    <citation type="journal article" date="2010" name="Genome Biol. Evol.">
        <title>Continuing evolution of Burkholderia mallei through genome reduction and large-scale rearrangements.</title>
        <authorList>
            <person name="Losada L."/>
            <person name="Ronning C.M."/>
            <person name="DeShazer D."/>
            <person name="Woods D."/>
            <person name="Fedorova N."/>
            <person name="Kim H.S."/>
            <person name="Shabalina S.A."/>
            <person name="Pearson T.R."/>
            <person name="Brinkac L."/>
            <person name="Tan P."/>
            <person name="Nandi T."/>
            <person name="Crabtree J."/>
            <person name="Badger J."/>
            <person name="Beckstrom-Sternberg S."/>
            <person name="Saqib M."/>
            <person name="Schutzer S.E."/>
            <person name="Keim P."/>
            <person name="Nierman W.C."/>
        </authorList>
    </citation>
    <scope>NUCLEOTIDE SEQUENCE [LARGE SCALE GENOMIC DNA]</scope>
    <source>
        <strain>668</strain>
    </source>
</reference>
<accession>A3NDW7</accession>
<proteinExistence type="inferred from homology"/>